<organism>
    <name type="scientific">Escherichia coli O45:K1 (strain S88 / ExPEC)</name>
    <dbReference type="NCBI Taxonomy" id="585035"/>
    <lineage>
        <taxon>Bacteria</taxon>
        <taxon>Pseudomonadati</taxon>
        <taxon>Pseudomonadota</taxon>
        <taxon>Gammaproteobacteria</taxon>
        <taxon>Enterobacterales</taxon>
        <taxon>Enterobacteriaceae</taxon>
        <taxon>Escherichia</taxon>
    </lineage>
</organism>
<keyword id="KW-0298">Galactitol metabolism</keyword>
<keyword id="KW-1185">Reference proteome</keyword>
<sequence>MKTLIARHKAGEHIGICSVCSAHPLVIEAALAFDRNSTRKVLIEATSNQVNQFGGYTGMTPADFREFVFAIADKVGFARERIILGGDHLGPNCWQQENADAAMEKSVELVKAYVRAGFSKIHLDASMSCADDSIPLAPETVAERAAVLCLAAESVATDCQREQLNYVIGTEVPVPGGEASAIQSVHITQVEDAANTLRTHQKAFIARGLAEALTRVIAIVVQPGVEFDHSNIIHYQAQEAQALAQWIEKTKMVYEAHSTDYQTQTAYRELVRDHFAILKVGPALTFALREAIFALAQIEQELIAPENRSRCLAVIEEVMLDEPQYWKKYYRTGFNDSLLGIRYSLSDRIRYYWPHSRIKNSVETMMVNLEGVDIPLGMISQYLPKQFERIQSGELSAIPHQLIMDKIYDVLRAYRYGCAE</sequence>
<accession>B7MEF0</accession>
<protein>
    <recommendedName>
        <fullName evidence="1">D-tagatose-1,6-bisphosphate aldolase subunit GatZ</fullName>
    </recommendedName>
</protein>
<comment type="function">
    <text evidence="1">Component of the tagatose-1,6-bisphosphate aldolase GatYZ that is required for full activity and stability of the Y subunit. Could have a chaperone-like function for the proper and stable folding of GatY. When expressed alone, GatZ does not show any aldolase activity. Is involved in the catabolism of galactitol.</text>
</comment>
<comment type="pathway">
    <text evidence="1">Carbohydrate metabolism; D-tagatose 6-phosphate degradation; D-glyceraldehyde 3-phosphate and glycerone phosphate from D-tagatose 6-phosphate: step 2/2.</text>
</comment>
<comment type="subunit">
    <text evidence="1">Forms a complex with GatY.</text>
</comment>
<comment type="similarity">
    <text evidence="1">Belongs to the GatZ/KbaZ family. GatZ subfamily.</text>
</comment>
<evidence type="ECO:0000255" key="1">
    <source>
        <dbReference type="HAMAP-Rule" id="MF_01296"/>
    </source>
</evidence>
<proteinExistence type="inferred from homology"/>
<name>GATZ_ECO45</name>
<feature type="chain" id="PRO_0000372500" description="D-tagatose-1,6-bisphosphate aldolase subunit GatZ">
    <location>
        <begin position="1"/>
        <end position="420"/>
    </location>
</feature>
<gene>
    <name evidence="1" type="primary">gatZ</name>
    <name type="ordered locus">ECS88_2237</name>
</gene>
<reference key="1">
    <citation type="journal article" date="2009" name="PLoS Genet.">
        <title>Organised genome dynamics in the Escherichia coli species results in highly diverse adaptive paths.</title>
        <authorList>
            <person name="Touchon M."/>
            <person name="Hoede C."/>
            <person name="Tenaillon O."/>
            <person name="Barbe V."/>
            <person name="Baeriswyl S."/>
            <person name="Bidet P."/>
            <person name="Bingen E."/>
            <person name="Bonacorsi S."/>
            <person name="Bouchier C."/>
            <person name="Bouvet O."/>
            <person name="Calteau A."/>
            <person name="Chiapello H."/>
            <person name="Clermont O."/>
            <person name="Cruveiller S."/>
            <person name="Danchin A."/>
            <person name="Diard M."/>
            <person name="Dossat C."/>
            <person name="Karoui M.E."/>
            <person name="Frapy E."/>
            <person name="Garry L."/>
            <person name="Ghigo J.M."/>
            <person name="Gilles A.M."/>
            <person name="Johnson J."/>
            <person name="Le Bouguenec C."/>
            <person name="Lescat M."/>
            <person name="Mangenot S."/>
            <person name="Martinez-Jehanne V."/>
            <person name="Matic I."/>
            <person name="Nassif X."/>
            <person name="Oztas S."/>
            <person name="Petit M.A."/>
            <person name="Pichon C."/>
            <person name="Rouy Z."/>
            <person name="Ruf C.S."/>
            <person name="Schneider D."/>
            <person name="Tourret J."/>
            <person name="Vacherie B."/>
            <person name="Vallenet D."/>
            <person name="Medigue C."/>
            <person name="Rocha E.P.C."/>
            <person name="Denamur E."/>
        </authorList>
    </citation>
    <scope>NUCLEOTIDE SEQUENCE [LARGE SCALE GENOMIC DNA]</scope>
    <source>
        <strain>S88 / ExPEC</strain>
    </source>
</reference>
<dbReference type="EMBL" id="CU928161">
    <property type="protein sequence ID" value="CAR03523.1"/>
    <property type="molecule type" value="Genomic_DNA"/>
</dbReference>
<dbReference type="RefSeq" id="WP_000853836.1">
    <property type="nucleotide sequence ID" value="NC_011742.1"/>
</dbReference>
<dbReference type="SMR" id="B7MEF0"/>
<dbReference type="KEGG" id="ecz:ECS88_2237"/>
<dbReference type="HOGENOM" id="CLU_053334_0_0_6"/>
<dbReference type="UniPathway" id="UPA00704">
    <property type="reaction ID" value="UER00716"/>
</dbReference>
<dbReference type="Proteomes" id="UP000000747">
    <property type="component" value="Chromosome"/>
</dbReference>
<dbReference type="GO" id="GO:0005886">
    <property type="term" value="C:plasma membrane"/>
    <property type="evidence" value="ECO:0007669"/>
    <property type="project" value="TreeGrafter"/>
</dbReference>
<dbReference type="GO" id="GO:2001059">
    <property type="term" value="P:D-tagatose 6-phosphate catabolic process"/>
    <property type="evidence" value="ECO:0007669"/>
    <property type="project" value="UniProtKB-UniRule"/>
</dbReference>
<dbReference type="GO" id="GO:0019402">
    <property type="term" value="P:galactitol metabolic process"/>
    <property type="evidence" value="ECO:0007669"/>
    <property type="project" value="UniProtKB-KW"/>
</dbReference>
<dbReference type="GO" id="GO:0009401">
    <property type="term" value="P:phosphoenolpyruvate-dependent sugar phosphotransferase system"/>
    <property type="evidence" value="ECO:0007669"/>
    <property type="project" value="TreeGrafter"/>
</dbReference>
<dbReference type="FunFam" id="3.20.20.70:FF:000141">
    <property type="entry name" value="D-tagatose-1,6-bisphosphate aldolase subunit GatZ"/>
    <property type="match status" value="1"/>
</dbReference>
<dbReference type="Gene3D" id="3.20.20.70">
    <property type="entry name" value="Aldolase class I"/>
    <property type="match status" value="1"/>
</dbReference>
<dbReference type="Gene3D" id="1.10.400.20">
    <property type="entry name" value="putative tagatose 6-phosphate kinase domain like"/>
    <property type="match status" value="1"/>
</dbReference>
<dbReference type="HAMAP" id="MF_01296">
    <property type="entry name" value="Tagatose_aldol_GatZ"/>
    <property type="match status" value="1"/>
</dbReference>
<dbReference type="InterPro" id="IPR013785">
    <property type="entry name" value="Aldolase_TIM"/>
</dbReference>
<dbReference type="InterPro" id="IPR012062">
    <property type="entry name" value="GatZ/KbaZ-like"/>
</dbReference>
<dbReference type="InterPro" id="IPR050303">
    <property type="entry name" value="GatZ_KbaZ_carbometab"/>
</dbReference>
<dbReference type="InterPro" id="IPR023436">
    <property type="entry name" value="TagBP_ald_GatZ"/>
</dbReference>
<dbReference type="NCBIfam" id="TIGR02810">
    <property type="entry name" value="agaZ_gatZ"/>
    <property type="match status" value="1"/>
</dbReference>
<dbReference type="NCBIfam" id="NF011626">
    <property type="entry name" value="PRK15052.1"/>
    <property type="match status" value="1"/>
</dbReference>
<dbReference type="PANTHER" id="PTHR32502:SF12">
    <property type="entry name" value="D-TAGATOSE-1,6-BISPHOSPHATE ALDOLASE SUBUNIT GATZ"/>
    <property type="match status" value="1"/>
</dbReference>
<dbReference type="PANTHER" id="PTHR32502">
    <property type="entry name" value="N-ACETYLGALACTOSAMINE PERMEASE II COMPONENT-RELATED"/>
    <property type="match status" value="1"/>
</dbReference>
<dbReference type="Pfam" id="PF08013">
    <property type="entry name" value="GatZ_KbaZ-like"/>
    <property type="match status" value="1"/>
</dbReference>
<dbReference type="PIRSF" id="PIRSF009264">
    <property type="entry name" value="TagBP_ald_AgaZ"/>
    <property type="match status" value="1"/>
</dbReference>
<dbReference type="SUPFAM" id="SSF51569">
    <property type="entry name" value="Aldolase"/>
    <property type="match status" value="1"/>
</dbReference>